<feature type="chain" id="PRO_0000173839" description="26S proteasome non-ATPase regulatory subunit 6">
    <location>
        <begin position="1"/>
        <end position="389"/>
    </location>
</feature>
<feature type="domain" description="PCI" evidence="2">
    <location>
        <begin position="193"/>
        <end position="361"/>
    </location>
</feature>
<feature type="sequence conflict" description="In Ref. 1; BAB26823." evidence="4" ref="1">
    <original>QLR</original>
    <variation>DCV</variation>
    <location>
        <begin position="21"/>
        <end position="23"/>
    </location>
</feature>
<proteinExistence type="evidence at protein level"/>
<sequence>MPLENLEEEGLPKNPDLRIAQLRFLLSLPEHRGDAAVREELMAAVRENNMAPYYEALCKSLDWQMDVDLLSKMKKANEEELKRLDEELEDAEKNLGESEIRDAMMAKAEYLCQIGDKEGALTAFRKTYDKTVALGHRLDIVFYLLRIGLFYMDNDLITRNTEKAKSLIEEGGDWDRRNRLKVYQGLYCVAIRDFKQAAELFLDTVSTFTSYELMDYKTFVTYTVYVSMIALERPDLREKVIKGAEILEVLHSLPAVRQYLFSLYECRYSVFFQSLAIVEQEMKKDWLFAPHYRYYVREMRIHAYSQLLESYRSLTLGYMAEAFGVGVDFIDQELSRFIAAGRLHCKIDKVNEIVETNRPDSKNWQYQETIKKGDLLLNRVQKLSRVINM</sequence>
<comment type="function">
    <text evidence="1">Component of the 26S proteasome, a multiprotein complex involved in the ATP-dependent degradation of ubiquitinated proteins. This complex plays a key role in the maintenance of protein homeostasis by removing misfolded or damaged proteins, which could impair cellular functions, and by removing proteins whose functions are no longer required. Therefore, the proteasome participates in numerous cellular processes, including cell cycle progression, apoptosis, or DNA damage repair.</text>
</comment>
<comment type="subunit">
    <text evidence="1 3">Component of the 19S proteasome regulatory particle complex. The 26S proteasome consists of a 20S core particle (CP) and two 19S regulatory subunits (RP). The regulatory particle is made of a lid composed of 9 subunits including PSMD6, a base containing 6 ATPases and few additional components.</text>
</comment>
<comment type="similarity">
    <text evidence="4">Belongs to the proteasome subunit S10 family.</text>
</comment>
<gene>
    <name type="primary">Psmd6</name>
</gene>
<protein>
    <recommendedName>
        <fullName>26S proteasome non-ATPase regulatory subunit 6</fullName>
    </recommendedName>
    <alternativeName>
        <fullName>26S proteasome regulatory subunit RPN7</fullName>
    </alternativeName>
    <alternativeName>
        <fullName>26S proteasome regulatory subunit S10</fullName>
    </alternativeName>
    <alternativeName>
        <fullName>p42A</fullName>
    </alternativeName>
</protein>
<evidence type="ECO:0000250" key="1">
    <source>
        <dbReference type="UniProtKB" id="Q15008"/>
    </source>
</evidence>
<evidence type="ECO:0000255" key="2">
    <source>
        <dbReference type="PROSITE-ProRule" id="PRU01185"/>
    </source>
</evidence>
<evidence type="ECO:0000269" key="3">
    <source>
    </source>
</evidence>
<evidence type="ECO:0000305" key="4"/>
<accession>Q99JI4</accession>
<accession>Q9CWZ1</accession>
<organism>
    <name type="scientific">Mus musculus</name>
    <name type="common">Mouse</name>
    <dbReference type="NCBI Taxonomy" id="10090"/>
    <lineage>
        <taxon>Eukaryota</taxon>
        <taxon>Metazoa</taxon>
        <taxon>Chordata</taxon>
        <taxon>Craniata</taxon>
        <taxon>Vertebrata</taxon>
        <taxon>Euteleostomi</taxon>
        <taxon>Mammalia</taxon>
        <taxon>Eutheria</taxon>
        <taxon>Euarchontoglires</taxon>
        <taxon>Glires</taxon>
        <taxon>Rodentia</taxon>
        <taxon>Myomorpha</taxon>
        <taxon>Muroidea</taxon>
        <taxon>Muridae</taxon>
        <taxon>Murinae</taxon>
        <taxon>Mus</taxon>
        <taxon>Mus</taxon>
    </lineage>
</organism>
<keyword id="KW-0647">Proteasome</keyword>
<keyword id="KW-1185">Reference proteome</keyword>
<reference key="1">
    <citation type="submission" date="2000-01" db="EMBL/GenBank/DDBJ databases">
        <title>A conserved gene.</title>
        <authorList>
            <person name="Ievolella C."/>
            <person name="Bertocco E."/>
            <person name="Negrisolo E."/>
            <person name="Valle G."/>
        </authorList>
    </citation>
    <scope>NUCLEOTIDE SEQUENCE [MRNA]</scope>
    <source>
        <tissue>Diaphragm</tissue>
    </source>
</reference>
<reference key="2">
    <citation type="journal article" date="2005" name="Science">
        <title>The transcriptional landscape of the mammalian genome.</title>
        <authorList>
            <person name="Carninci P."/>
            <person name="Kasukawa T."/>
            <person name="Katayama S."/>
            <person name="Gough J."/>
            <person name="Frith M.C."/>
            <person name="Maeda N."/>
            <person name="Oyama R."/>
            <person name="Ravasi T."/>
            <person name="Lenhard B."/>
            <person name="Wells C."/>
            <person name="Kodzius R."/>
            <person name="Shimokawa K."/>
            <person name="Bajic V.B."/>
            <person name="Brenner S.E."/>
            <person name="Batalov S."/>
            <person name="Forrest A.R."/>
            <person name="Zavolan M."/>
            <person name="Davis M.J."/>
            <person name="Wilming L.G."/>
            <person name="Aidinis V."/>
            <person name="Allen J.E."/>
            <person name="Ambesi-Impiombato A."/>
            <person name="Apweiler R."/>
            <person name="Aturaliya R.N."/>
            <person name="Bailey T.L."/>
            <person name="Bansal M."/>
            <person name="Baxter L."/>
            <person name="Beisel K.W."/>
            <person name="Bersano T."/>
            <person name="Bono H."/>
            <person name="Chalk A.M."/>
            <person name="Chiu K.P."/>
            <person name="Choudhary V."/>
            <person name="Christoffels A."/>
            <person name="Clutterbuck D.R."/>
            <person name="Crowe M.L."/>
            <person name="Dalla E."/>
            <person name="Dalrymple B.P."/>
            <person name="de Bono B."/>
            <person name="Della Gatta G."/>
            <person name="di Bernardo D."/>
            <person name="Down T."/>
            <person name="Engstrom P."/>
            <person name="Fagiolini M."/>
            <person name="Faulkner G."/>
            <person name="Fletcher C.F."/>
            <person name="Fukushima T."/>
            <person name="Furuno M."/>
            <person name="Futaki S."/>
            <person name="Gariboldi M."/>
            <person name="Georgii-Hemming P."/>
            <person name="Gingeras T.R."/>
            <person name="Gojobori T."/>
            <person name="Green R.E."/>
            <person name="Gustincich S."/>
            <person name="Harbers M."/>
            <person name="Hayashi Y."/>
            <person name="Hensch T.K."/>
            <person name="Hirokawa N."/>
            <person name="Hill D."/>
            <person name="Huminiecki L."/>
            <person name="Iacono M."/>
            <person name="Ikeo K."/>
            <person name="Iwama A."/>
            <person name="Ishikawa T."/>
            <person name="Jakt M."/>
            <person name="Kanapin A."/>
            <person name="Katoh M."/>
            <person name="Kawasawa Y."/>
            <person name="Kelso J."/>
            <person name="Kitamura H."/>
            <person name="Kitano H."/>
            <person name="Kollias G."/>
            <person name="Krishnan S.P."/>
            <person name="Kruger A."/>
            <person name="Kummerfeld S.K."/>
            <person name="Kurochkin I.V."/>
            <person name="Lareau L.F."/>
            <person name="Lazarevic D."/>
            <person name="Lipovich L."/>
            <person name="Liu J."/>
            <person name="Liuni S."/>
            <person name="McWilliam S."/>
            <person name="Madan Babu M."/>
            <person name="Madera M."/>
            <person name="Marchionni L."/>
            <person name="Matsuda H."/>
            <person name="Matsuzawa S."/>
            <person name="Miki H."/>
            <person name="Mignone F."/>
            <person name="Miyake S."/>
            <person name="Morris K."/>
            <person name="Mottagui-Tabar S."/>
            <person name="Mulder N."/>
            <person name="Nakano N."/>
            <person name="Nakauchi H."/>
            <person name="Ng P."/>
            <person name="Nilsson R."/>
            <person name="Nishiguchi S."/>
            <person name="Nishikawa S."/>
            <person name="Nori F."/>
            <person name="Ohara O."/>
            <person name="Okazaki Y."/>
            <person name="Orlando V."/>
            <person name="Pang K.C."/>
            <person name="Pavan W.J."/>
            <person name="Pavesi G."/>
            <person name="Pesole G."/>
            <person name="Petrovsky N."/>
            <person name="Piazza S."/>
            <person name="Reed J."/>
            <person name="Reid J.F."/>
            <person name="Ring B.Z."/>
            <person name="Ringwald M."/>
            <person name="Rost B."/>
            <person name="Ruan Y."/>
            <person name="Salzberg S.L."/>
            <person name="Sandelin A."/>
            <person name="Schneider C."/>
            <person name="Schoenbach C."/>
            <person name="Sekiguchi K."/>
            <person name="Semple C.A."/>
            <person name="Seno S."/>
            <person name="Sessa L."/>
            <person name="Sheng Y."/>
            <person name="Shibata Y."/>
            <person name="Shimada H."/>
            <person name="Shimada K."/>
            <person name="Silva D."/>
            <person name="Sinclair B."/>
            <person name="Sperling S."/>
            <person name="Stupka E."/>
            <person name="Sugiura K."/>
            <person name="Sultana R."/>
            <person name="Takenaka Y."/>
            <person name="Taki K."/>
            <person name="Tammoja K."/>
            <person name="Tan S.L."/>
            <person name="Tang S."/>
            <person name="Taylor M.S."/>
            <person name="Tegner J."/>
            <person name="Teichmann S.A."/>
            <person name="Ueda H.R."/>
            <person name="van Nimwegen E."/>
            <person name="Verardo R."/>
            <person name="Wei C.L."/>
            <person name="Yagi K."/>
            <person name="Yamanishi H."/>
            <person name="Zabarovsky E."/>
            <person name="Zhu S."/>
            <person name="Zimmer A."/>
            <person name="Hide W."/>
            <person name="Bult C."/>
            <person name="Grimmond S.M."/>
            <person name="Teasdale R.D."/>
            <person name="Liu E.T."/>
            <person name="Brusic V."/>
            <person name="Quackenbush J."/>
            <person name="Wahlestedt C."/>
            <person name="Mattick J.S."/>
            <person name="Hume D.A."/>
            <person name="Kai C."/>
            <person name="Sasaki D."/>
            <person name="Tomaru Y."/>
            <person name="Fukuda S."/>
            <person name="Kanamori-Katayama M."/>
            <person name="Suzuki M."/>
            <person name="Aoki J."/>
            <person name="Arakawa T."/>
            <person name="Iida J."/>
            <person name="Imamura K."/>
            <person name="Itoh M."/>
            <person name="Kato T."/>
            <person name="Kawaji H."/>
            <person name="Kawagashira N."/>
            <person name="Kawashima T."/>
            <person name="Kojima M."/>
            <person name="Kondo S."/>
            <person name="Konno H."/>
            <person name="Nakano K."/>
            <person name="Ninomiya N."/>
            <person name="Nishio T."/>
            <person name="Okada M."/>
            <person name="Plessy C."/>
            <person name="Shibata K."/>
            <person name="Shiraki T."/>
            <person name="Suzuki S."/>
            <person name="Tagami M."/>
            <person name="Waki K."/>
            <person name="Watahiki A."/>
            <person name="Okamura-Oho Y."/>
            <person name="Suzuki H."/>
            <person name="Kawai J."/>
            <person name="Hayashizaki Y."/>
        </authorList>
    </citation>
    <scope>NUCLEOTIDE SEQUENCE [LARGE SCALE MRNA]</scope>
    <source>
        <strain>C57BL/6J</strain>
        <tissue>Embryonic stem cell</tissue>
    </source>
</reference>
<reference key="3">
    <citation type="journal article" date="2004" name="Genome Res.">
        <title>The status, quality, and expansion of the NIH full-length cDNA project: the Mammalian Gene Collection (MGC).</title>
        <authorList>
            <consortium name="The MGC Project Team"/>
        </authorList>
    </citation>
    <scope>NUCLEOTIDE SEQUENCE [LARGE SCALE MRNA]</scope>
</reference>
<reference key="4">
    <citation type="journal article" date="2006" name="Circ. Res.">
        <title>Mapping the murine cardiac 26S proteasome complexes.</title>
        <authorList>
            <person name="Gomes A.V."/>
            <person name="Zong C."/>
            <person name="Edmondson R.D."/>
            <person name="Li X."/>
            <person name="Stefani E."/>
            <person name="Zhang J."/>
            <person name="Jones R.C."/>
            <person name="Thyparambil S."/>
            <person name="Wang G.W."/>
            <person name="Qiao X."/>
            <person name="Bardag-Gorce F."/>
            <person name="Ping P."/>
        </authorList>
    </citation>
    <scope>IDENTIFICATION IN THE 19S PROTEASOME REGULATORY COMPLEX</scope>
</reference>
<reference key="5">
    <citation type="journal article" date="2010" name="Cell">
        <title>A tissue-specific atlas of mouse protein phosphorylation and expression.</title>
        <authorList>
            <person name="Huttlin E.L."/>
            <person name="Jedrychowski M.P."/>
            <person name="Elias J.E."/>
            <person name="Goswami T."/>
            <person name="Rad R."/>
            <person name="Beausoleil S.A."/>
            <person name="Villen J."/>
            <person name="Haas W."/>
            <person name="Sowa M.E."/>
            <person name="Gygi S.P."/>
        </authorList>
    </citation>
    <scope>IDENTIFICATION BY MASS SPECTROMETRY [LARGE SCALE ANALYSIS]</scope>
    <source>
        <tissue>Brain</tissue>
        <tissue>Brown adipose tissue</tissue>
        <tissue>Heart</tissue>
        <tissue>Kidney</tissue>
        <tissue>Liver</tissue>
        <tissue>Lung</tissue>
        <tissue>Pancreas</tissue>
        <tissue>Spleen</tissue>
        <tissue>Testis</tissue>
    </source>
</reference>
<name>PSMD6_MOUSE</name>
<dbReference type="EMBL" id="AJ252147">
    <property type="protein sequence ID" value="CAC34579.1"/>
    <property type="molecule type" value="mRNA"/>
</dbReference>
<dbReference type="EMBL" id="AK010287">
    <property type="protein sequence ID" value="BAB26823.1"/>
    <property type="molecule type" value="mRNA"/>
</dbReference>
<dbReference type="EMBL" id="BC006869">
    <property type="protein sequence ID" value="AAH06869.1"/>
    <property type="molecule type" value="mRNA"/>
</dbReference>
<dbReference type="CCDS" id="CCDS26824.1"/>
<dbReference type="RefSeq" id="NP_079826.2">
    <property type="nucleotide sequence ID" value="NM_025550.2"/>
</dbReference>
<dbReference type="SMR" id="Q99JI4"/>
<dbReference type="BioGRID" id="211457">
    <property type="interactions" value="88"/>
</dbReference>
<dbReference type="FunCoup" id="Q99JI4">
    <property type="interactions" value="1622"/>
</dbReference>
<dbReference type="IntAct" id="Q99JI4">
    <property type="interactions" value="40"/>
</dbReference>
<dbReference type="MINT" id="Q99JI4"/>
<dbReference type="STRING" id="10090.ENSMUSP00000022256"/>
<dbReference type="iPTMnet" id="Q99JI4"/>
<dbReference type="PhosphoSitePlus" id="Q99JI4"/>
<dbReference type="SwissPalm" id="Q99JI4"/>
<dbReference type="jPOST" id="Q99JI4"/>
<dbReference type="PaxDb" id="10090-ENSMUSP00000022256"/>
<dbReference type="PeptideAtlas" id="Q99JI4"/>
<dbReference type="ProteomicsDB" id="291704"/>
<dbReference type="Pumba" id="Q99JI4"/>
<dbReference type="Antibodypedia" id="31765">
    <property type="antibodies" value="302 antibodies from 33 providers"/>
</dbReference>
<dbReference type="DNASU" id="66413"/>
<dbReference type="Ensembl" id="ENSMUST00000022256.5">
    <property type="protein sequence ID" value="ENSMUSP00000022256.4"/>
    <property type="gene ID" value="ENSMUSG00000021737.5"/>
</dbReference>
<dbReference type="GeneID" id="66413"/>
<dbReference type="KEGG" id="mmu:66413"/>
<dbReference type="UCSC" id="uc007sgj.1">
    <property type="organism name" value="mouse"/>
</dbReference>
<dbReference type="AGR" id="MGI:1913663"/>
<dbReference type="CTD" id="9861"/>
<dbReference type="MGI" id="MGI:1913663">
    <property type="gene designation" value="Psmd6"/>
</dbReference>
<dbReference type="VEuPathDB" id="HostDB:ENSMUSG00000021737"/>
<dbReference type="eggNOG" id="KOG0687">
    <property type="taxonomic scope" value="Eukaryota"/>
</dbReference>
<dbReference type="GeneTree" id="ENSGT00510000046608"/>
<dbReference type="HOGENOM" id="CLU_031814_0_0_1"/>
<dbReference type="InParanoid" id="Q99JI4"/>
<dbReference type="OMA" id="RLHCKVD"/>
<dbReference type="OrthoDB" id="1452at2759"/>
<dbReference type="PhylomeDB" id="Q99JI4"/>
<dbReference type="TreeFam" id="TF313819"/>
<dbReference type="Reactome" id="R-MMU-1169091">
    <property type="pathway name" value="Activation of NF-kappaB in B cells"/>
</dbReference>
<dbReference type="Reactome" id="R-MMU-1234176">
    <property type="pathway name" value="Oxygen-dependent proline hydroxylation of Hypoxia-inducible Factor Alpha"/>
</dbReference>
<dbReference type="Reactome" id="R-MMU-1236978">
    <property type="pathway name" value="Cross-presentation of soluble exogenous antigens (endosomes)"/>
</dbReference>
<dbReference type="Reactome" id="R-MMU-174084">
    <property type="pathway name" value="Autodegradation of Cdh1 by Cdh1:APC/C"/>
</dbReference>
<dbReference type="Reactome" id="R-MMU-174154">
    <property type="pathway name" value="APC/C:Cdc20 mediated degradation of Securin"/>
</dbReference>
<dbReference type="Reactome" id="R-MMU-174178">
    <property type="pathway name" value="APC/C:Cdh1 mediated degradation of Cdc20 and other APC/C:Cdh1 targeted proteins in late mitosis/early G1"/>
</dbReference>
<dbReference type="Reactome" id="R-MMU-174184">
    <property type="pathway name" value="Cdc20:Phospho-APC/C mediated degradation of Cyclin A"/>
</dbReference>
<dbReference type="Reactome" id="R-MMU-187577">
    <property type="pathway name" value="SCF(Skp2)-mediated degradation of p27/p21"/>
</dbReference>
<dbReference type="Reactome" id="R-MMU-195253">
    <property type="pathway name" value="Degradation of beta-catenin by the destruction complex"/>
</dbReference>
<dbReference type="Reactome" id="R-MMU-202424">
    <property type="pathway name" value="Downstream TCR signaling"/>
</dbReference>
<dbReference type="Reactome" id="R-MMU-2467813">
    <property type="pathway name" value="Separation of Sister Chromatids"/>
</dbReference>
<dbReference type="Reactome" id="R-MMU-2871837">
    <property type="pathway name" value="FCERI mediated NF-kB activation"/>
</dbReference>
<dbReference type="Reactome" id="R-MMU-349425">
    <property type="pathway name" value="Autodegradation of the E3 ubiquitin ligase COP1"/>
</dbReference>
<dbReference type="Reactome" id="R-MMU-350562">
    <property type="pathway name" value="Regulation of ornithine decarboxylase (ODC)"/>
</dbReference>
<dbReference type="Reactome" id="R-MMU-382556">
    <property type="pathway name" value="ABC-family proteins mediated transport"/>
</dbReference>
<dbReference type="Reactome" id="R-MMU-450408">
    <property type="pathway name" value="AUF1 (hnRNP D0) binds and destabilizes mRNA"/>
</dbReference>
<dbReference type="Reactome" id="R-MMU-4608870">
    <property type="pathway name" value="Asymmetric localization of PCP proteins"/>
</dbReference>
<dbReference type="Reactome" id="R-MMU-4641257">
    <property type="pathway name" value="Degradation of AXIN"/>
</dbReference>
<dbReference type="Reactome" id="R-MMU-4641258">
    <property type="pathway name" value="Degradation of DVL"/>
</dbReference>
<dbReference type="Reactome" id="R-MMU-5358346">
    <property type="pathway name" value="Hedgehog ligand biogenesis"/>
</dbReference>
<dbReference type="Reactome" id="R-MMU-5607761">
    <property type="pathway name" value="Dectin-1 mediated noncanonical NF-kB signaling"/>
</dbReference>
<dbReference type="Reactome" id="R-MMU-5607764">
    <property type="pathway name" value="CLEC7A (Dectin-1) signaling"/>
</dbReference>
<dbReference type="Reactome" id="R-MMU-5610780">
    <property type="pathway name" value="Degradation of GLI1 by the proteasome"/>
</dbReference>
<dbReference type="Reactome" id="R-MMU-5610785">
    <property type="pathway name" value="GLI3 is processed to GLI3R by the proteasome"/>
</dbReference>
<dbReference type="Reactome" id="R-MMU-5632684">
    <property type="pathway name" value="Hedgehog 'on' state"/>
</dbReference>
<dbReference type="Reactome" id="R-MMU-5658442">
    <property type="pathway name" value="Regulation of RAS by GAPs"/>
</dbReference>
<dbReference type="Reactome" id="R-MMU-5668541">
    <property type="pathway name" value="TNFR2 non-canonical NF-kB pathway"/>
</dbReference>
<dbReference type="Reactome" id="R-MMU-5676590">
    <property type="pathway name" value="NIK--&gt;noncanonical NF-kB signaling"/>
</dbReference>
<dbReference type="Reactome" id="R-MMU-5687128">
    <property type="pathway name" value="MAPK6/MAPK4 signaling"/>
</dbReference>
<dbReference type="Reactome" id="R-MMU-5689603">
    <property type="pathway name" value="UCH proteinases"/>
</dbReference>
<dbReference type="Reactome" id="R-MMU-5689880">
    <property type="pathway name" value="Ub-specific processing proteases"/>
</dbReference>
<dbReference type="Reactome" id="R-MMU-6798695">
    <property type="pathway name" value="Neutrophil degranulation"/>
</dbReference>
<dbReference type="Reactome" id="R-MMU-68867">
    <property type="pathway name" value="Assembly of the pre-replicative complex"/>
</dbReference>
<dbReference type="Reactome" id="R-MMU-68949">
    <property type="pathway name" value="Orc1 removal from chromatin"/>
</dbReference>
<dbReference type="Reactome" id="R-MMU-69017">
    <property type="pathway name" value="CDK-mediated phosphorylation and removal of Cdc6"/>
</dbReference>
<dbReference type="Reactome" id="R-MMU-69481">
    <property type="pathway name" value="G2/M Checkpoints"/>
</dbReference>
<dbReference type="Reactome" id="R-MMU-69601">
    <property type="pathway name" value="Ubiquitin Mediated Degradation of Phosphorylated Cdc25A"/>
</dbReference>
<dbReference type="Reactome" id="R-MMU-75815">
    <property type="pathway name" value="Ubiquitin-dependent degradation of Cyclin D"/>
</dbReference>
<dbReference type="Reactome" id="R-MMU-8852276">
    <property type="pathway name" value="The role of GTSE1 in G2/M progression after G2 checkpoint"/>
</dbReference>
<dbReference type="Reactome" id="R-MMU-8854050">
    <property type="pathway name" value="FBXL7 down-regulates AURKA during mitotic entry and in early mitosis"/>
</dbReference>
<dbReference type="Reactome" id="R-MMU-8939236">
    <property type="pathway name" value="RUNX1 regulates transcription of genes involved in differentiation of HSCs"/>
</dbReference>
<dbReference type="Reactome" id="R-MMU-8939902">
    <property type="pathway name" value="Regulation of RUNX2 expression and activity"/>
</dbReference>
<dbReference type="Reactome" id="R-MMU-8941858">
    <property type="pathway name" value="Regulation of RUNX3 expression and activity"/>
</dbReference>
<dbReference type="Reactome" id="R-MMU-8948751">
    <property type="pathway name" value="Regulation of PTEN stability and activity"/>
</dbReference>
<dbReference type="Reactome" id="R-MMU-8951664">
    <property type="pathway name" value="Neddylation"/>
</dbReference>
<dbReference type="Reactome" id="R-MMU-9020702">
    <property type="pathway name" value="Interleukin-1 signaling"/>
</dbReference>
<dbReference type="Reactome" id="R-MMU-9755511">
    <property type="pathway name" value="KEAP1-NFE2L2 pathway"/>
</dbReference>
<dbReference type="Reactome" id="R-MMU-9762114">
    <property type="pathway name" value="GSK3B and BTRC:CUL1-mediated-degradation of NFE2L2"/>
</dbReference>
<dbReference type="Reactome" id="R-MMU-983168">
    <property type="pathway name" value="Antigen processing: Ubiquitination &amp; Proteasome degradation"/>
</dbReference>
<dbReference type="Reactome" id="R-MMU-9907900">
    <property type="pathway name" value="Proteasome assembly"/>
</dbReference>
<dbReference type="BioGRID-ORCS" id="66413">
    <property type="hits" value="25 hits in 78 CRISPR screens"/>
</dbReference>
<dbReference type="ChiTaRS" id="Psmd6">
    <property type="organism name" value="mouse"/>
</dbReference>
<dbReference type="PRO" id="PR:Q99JI4"/>
<dbReference type="Proteomes" id="UP000000589">
    <property type="component" value="Chromosome 14"/>
</dbReference>
<dbReference type="RNAct" id="Q99JI4">
    <property type="molecule type" value="protein"/>
</dbReference>
<dbReference type="Bgee" id="ENSMUSG00000021737">
    <property type="expression patterns" value="Expressed in otic placode and 264 other cell types or tissues"/>
</dbReference>
<dbReference type="ExpressionAtlas" id="Q99JI4">
    <property type="expression patterns" value="baseline and differential"/>
</dbReference>
<dbReference type="GO" id="GO:0022624">
    <property type="term" value="C:proteasome accessory complex"/>
    <property type="evidence" value="ECO:0000314"/>
    <property type="project" value="UniProtKB"/>
</dbReference>
<dbReference type="FunFam" id="1.25.40.570:FF:000004">
    <property type="entry name" value="26S proteasome non-ATPase regulatory subunit 6"/>
    <property type="match status" value="1"/>
</dbReference>
<dbReference type="Gene3D" id="1.25.40.570">
    <property type="match status" value="1"/>
</dbReference>
<dbReference type="InterPro" id="IPR000717">
    <property type="entry name" value="PCI_dom"/>
</dbReference>
<dbReference type="InterPro" id="IPR019585">
    <property type="entry name" value="Rpn7/CSN1"/>
</dbReference>
<dbReference type="InterPro" id="IPR045135">
    <property type="entry name" value="Rpn7_N"/>
</dbReference>
<dbReference type="InterPro" id="IPR049549">
    <property type="entry name" value="RPN7_PSMD6_C"/>
</dbReference>
<dbReference type="InterPro" id="IPR011990">
    <property type="entry name" value="TPR-like_helical_dom_sf"/>
</dbReference>
<dbReference type="InterPro" id="IPR036390">
    <property type="entry name" value="WH_DNA-bd_sf"/>
</dbReference>
<dbReference type="PANTHER" id="PTHR14145:SF1">
    <property type="entry name" value="26S PROTEASOME NON-ATPASE REGULATORY SUBUNIT 6"/>
    <property type="match status" value="1"/>
</dbReference>
<dbReference type="PANTHER" id="PTHR14145">
    <property type="entry name" value="26S PROTESOME SUBUNIT 6"/>
    <property type="match status" value="1"/>
</dbReference>
<dbReference type="Pfam" id="PF01399">
    <property type="entry name" value="PCI"/>
    <property type="match status" value="1"/>
</dbReference>
<dbReference type="Pfam" id="PF10602">
    <property type="entry name" value="RPN7"/>
    <property type="match status" value="1"/>
</dbReference>
<dbReference type="Pfam" id="PF21154">
    <property type="entry name" value="RPN7_PSMD6_C"/>
    <property type="match status" value="1"/>
</dbReference>
<dbReference type="SMART" id="SM00088">
    <property type="entry name" value="PINT"/>
    <property type="match status" value="1"/>
</dbReference>
<dbReference type="SUPFAM" id="SSF48452">
    <property type="entry name" value="TPR-like"/>
    <property type="match status" value="1"/>
</dbReference>
<dbReference type="SUPFAM" id="SSF46785">
    <property type="entry name" value="Winged helix' DNA-binding domain"/>
    <property type="match status" value="1"/>
</dbReference>
<dbReference type="PROSITE" id="PS50250">
    <property type="entry name" value="PCI"/>
    <property type="match status" value="1"/>
</dbReference>